<accession>Q54K76</accession>
<keyword id="KW-0186">Copper</keyword>
<keyword id="KW-1185">Reference proteome</keyword>
<dbReference type="EMBL" id="AAFI02000102">
    <property type="protein sequence ID" value="EAL63669.1"/>
    <property type="molecule type" value="Genomic_DNA"/>
</dbReference>
<dbReference type="RefSeq" id="XP_637179.1">
    <property type="nucleotide sequence ID" value="XM_632087.1"/>
</dbReference>
<dbReference type="SMR" id="Q54K76"/>
<dbReference type="STRING" id="44689.Q54K76"/>
<dbReference type="PaxDb" id="44689-DDB0266769"/>
<dbReference type="EnsemblProtists" id="EAL63669">
    <property type="protein sequence ID" value="EAL63669"/>
    <property type="gene ID" value="DDB_G0287539"/>
</dbReference>
<dbReference type="GeneID" id="8626180"/>
<dbReference type="KEGG" id="ddi:DDB_G0287539"/>
<dbReference type="dictyBase" id="DDB_G0287539">
    <property type="gene designation" value="cutc"/>
</dbReference>
<dbReference type="VEuPathDB" id="AmoebaDB:DDB_G0287539"/>
<dbReference type="eggNOG" id="KOG4013">
    <property type="taxonomic scope" value="Eukaryota"/>
</dbReference>
<dbReference type="HOGENOM" id="CLU_050555_3_2_1"/>
<dbReference type="InParanoid" id="Q54K76"/>
<dbReference type="OMA" id="HRAFDQC"/>
<dbReference type="PhylomeDB" id="Q54K76"/>
<dbReference type="PRO" id="PR:Q54K76"/>
<dbReference type="Proteomes" id="UP000002195">
    <property type="component" value="Chromosome 5"/>
</dbReference>
<dbReference type="GO" id="GO:0005507">
    <property type="term" value="F:copper ion binding"/>
    <property type="evidence" value="ECO:0000318"/>
    <property type="project" value="GO_Central"/>
</dbReference>
<dbReference type="FunFam" id="3.20.20.380:FF:000001">
    <property type="entry name" value="Copper homeostasis protein CutC"/>
    <property type="match status" value="1"/>
</dbReference>
<dbReference type="Gene3D" id="3.20.20.380">
    <property type="entry name" value="Copper homeostasis (CutC) domain"/>
    <property type="match status" value="1"/>
</dbReference>
<dbReference type="HAMAP" id="MF_00795">
    <property type="entry name" value="CutC"/>
    <property type="match status" value="1"/>
</dbReference>
<dbReference type="InterPro" id="IPR005627">
    <property type="entry name" value="CutC-like"/>
</dbReference>
<dbReference type="InterPro" id="IPR036822">
    <property type="entry name" value="CutC-like_dom_sf"/>
</dbReference>
<dbReference type="PANTHER" id="PTHR12598">
    <property type="entry name" value="COPPER HOMEOSTASIS PROTEIN CUTC"/>
    <property type="match status" value="1"/>
</dbReference>
<dbReference type="PANTHER" id="PTHR12598:SF0">
    <property type="entry name" value="COPPER HOMEOSTASIS PROTEIN CUTC HOMOLOG"/>
    <property type="match status" value="1"/>
</dbReference>
<dbReference type="Pfam" id="PF03932">
    <property type="entry name" value="CutC"/>
    <property type="match status" value="2"/>
</dbReference>
<dbReference type="SUPFAM" id="SSF110395">
    <property type="entry name" value="CutC-like"/>
    <property type="match status" value="1"/>
</dbReference>
<reference key="1">
    <citation type="journal article" date="2005" name="Nature">
        <title>The genome of the social amoeba Dictyostelium discoideum.</title>
        <authorList>
            <person name="Eichinger L."/>
            <person name="Pachebat J.A."/>
            <person name="Gloeckner G."/>
            <person name="Rajandream M.A."/>
            <person name="Sucgang R."/>
            <person name="Berriman M."/>
            <person name="Song J."/>
            <person name="Olsen R."/>
            <person name="Szafranski K."/>
            <person name="Xu Q."/>
            <person name="Tunggal B."/>
            <person name="Kummerfeld S."/>
            <person name="Madera M."/>
            <person name="Konfortov B.A."/>
            <person name="Rivero F."/>
            <person name="Bankier A.T."/>
            <person name="Lehmann R."/>
            <person name="Hamlin N."/>
            <person name="Davies R."/>
            <person name="Gaudet P."/>
            <person name="Fey P."/>
            <person name="Pilcher K."/>
            <person name="Chen G."/>
            <person name="Saunders D."/>
            <person name="Sodergren E.J."/>
            <person name="Davis P."/>
            <person name="Kerhornou A."/>
            <person name="Nie X."/>
            <person name="Hall N."/>
            <person name="Anjard C."/>
            <person name="Hemphill L."/>
            <person name="Bason N."/>
            <person name="Farbrother P."/>
            <person name="Desany B."/>
            <person name="Just E."/>
            <person name="Morio T."/>
            <person name="Rost R."/>
            <person name="Churcher C.M."/>
            <person name="Cooper J."/>
            <person name="Haydock S."/>
            <person name="van Driessche N."/>
            <person name="Cronin A."/>
            <person name="Goodhead I."/>
            <person name="Muzny D.M."/>
            <person name="Mourier T."/>
            <person name="Pain A."/>
            <person name="Lu M."/>
            <person name="Harper D."/>
            <person name="Lindsay R."/>
            <person name="Hauser H."/>
            <person name="James K.D."/>
            <person name="Quiles M."/>
            <person name="Madan Babu M."/>
            <person name="Saito T."/>
            <person name="Buchrieser C."/>
            <person name="Wardroper A."/>
            <person name="Felder M."/>
            <person name="Thangavelu M."/>
            <person name="Johnson D."/>
            <person name="Knights A."/>
            <person name="Loulseged H."/>
            <person name="Mungall K.L."/>
            <person name="Oliver K."/>
            <person name="Price C."/>
            <person name="Quail M.A."/>
            <person name="Urushihara H."/>
            <person name="Hernandez J."/>
            <person name="Rabbinowitsch E."/>
            <person name="Steffen D."/>
            <person name="Sanders M."/>
            <person name="Ma J."/>
            <person name="Kohara Y."/>
            <person name="Sharp S."/>
            <person name="Simmonds M.N."/>
            <person name="Spiegler S."/>
            <person name="Tivey A."/>
            <person name="Sugano S."/>
            <person name="White B."/>
            <person name="Walker D."/>
            <person name="Woodward J.R."/>
            <person name="Winckler T."/>
            <person name="Tanaka Y."/>
            <person name="Shaulsky G."/>
            <person name="Schleicher M."/>
            <person name="Weinstock G.M."/>
            <person name="Rosenthal A."/>
            <person name="Cox E.C."/>
            <person name="Chisholm R.L."/>
            <person name="Gibbs R.A."/>
            <person name="Loomis W.F."/>
            <person name="Platzer M."/>
            <person name="Kay R.R."/>
            <person name="Williams J.G."/>
            <person name="Dear P.H."/>
            <person name="Noegel A.A."/>
            <person name="Barrell B.G."/>
            <person name="Kuspa A."/>
        </authorList>
    </citation>
    <scope>NUCLEOTIDE SEQUENCE [LARGE SCALE GENOMIC DNA]</scope>
    <source>
        <strain>AX4</strain>
    </source>
</reference>
<proteinExistence type="inferred from homology"/>
<comment type="function">
    <text evidence="1">Involved in copper homeostasis.</text>
</comment>
<comment type="similarity">
    <text evidence="2">Belongs to the CutC family.</text>
</comment>
<protein>
    <recommendedName>
        <fullName>Copper homeostasis protein cutC homolog</fullName>
    </recommendedName>
</protein>
<evidence type="ECO:0000250" key="1"/>
<evidence type="ECO:0000305" key="2"/>
<feature type="chain" id="PRO_0000330319" description="Copper homeostasis protein cutC homolog">
    <location>
        <begin position="1"/>
        <end position="280"/>
    </location>
</feature>
<gene>
    <name type="primary">cutc</name>
    <name type="ORF">DDB_G0287539</name>
</gene>
<organism>
    <name type="scientific">Dictyostelium discoideum</name>
    <name type="common">Social amoeba</name>
    <dbReference type="NCBI Taxonomy" id="44689"/>
    <lineage>
        <taxon>Eukaryota</taxon>
        <taxon>Amoebozoa</taxon>
        <taxon>Evosea</taxon>
        <taxon>Eumycetozoa</taxon>
        <taxon>Dictyostelia</taxon>
        <taxon>Dictyosteliales</taxon>
        <taxon>Dictyosteliaceae</taxon>
        <taxon>Dictyostelium</taxon>
    </lineage>
</organism>
<name>CUTC_DICDI</name>
<sequence length="280" mass="30879">MSEQDIKFEVCVDSLSSCIEAINGGASRLELCSSLFSGGLTPSYGLMKTLKEYIENHEISIDIFVMIRPRSGDFLYNQDEITIMKHDIELVKQISNQCSSFSGIVIGLLNSDGTIDKCNTEKLVELASPLSVTFHRAFDMTRDYIESFNTLNSINCSTSNNNNNNNSGGGCGKISRILTSGMESSVLEGIDTIKELIKLSNGTDITILPGGGITQKNINKIIKKTKLKEYHISARTVSDSKMQFRNTSVFMGGSLRESEYTYAIVDKNKIQGFINKSNTN</sequence>